<reference key="1">
    <citation type="journal article" date="2004" name="Nat. Biotechnol.">
        <title>Complete sequence and comparative genome analysis of the dairy bacterium Streptococcus thermophilus.</title>
        <authorList>
            <person name="Bolotin A."/>
            <person name="Quinquis B."/>
            <person name="Renault P."/>
            <person name="Sorokin A."/>
            <person name="Ehrlich S.D."/>
            <person name="Kulakauskas S."/>
            <person name="Lapidus A."/>
            <person name="Goltsman E."/>
            <person name="Mazur M."/>
            <person name="Pusch G.D."/>
            <person name="Fonstein M."/>
            <person name="Overbeek R."/>
            <person name="Kyprides N."/>
            <person name="Purnelle B."/>
            <person name="Prozzi D."/>
            <person name="Ngui K."/>
            <person name="Masuy D."/>
            <person name="Hancy F."/>
            <person name="Burteau S."/>
            <person name="Boutry M."/>
            <person name="Delcour J."/>
            <person name="Goffeau A."/>
            <person name="Hols P."/>
        </authorList>
    </citation>
    <scope>NUCLEOTIDE SEQUENCE [LARGE SCALE GENOMIC DNA]</scope>
    <source>
        <strain>CNRZ 1066</strain>
    </source>
</reference>
<organism>
    <name type="scientific">Streptococcus thermophilus (strain CNRZ 1066)</name>
    <dbReference type="NCBI Taxonomy" id="299768"/>
    <lineage>
        <taxon>Bacteria</taxon>
        <taxon>Bacillati</taxon>
        <taxon>Bacillota</taxon>
        <taxon>Bacilli</taxon>
        <taxon>Lactobacillales</taxon>
        <taxon>Streptococcaceae</taxon>
        <taxon>Streptococcus</taxon>
    </lineage>
</organism>
<dbReference type="EC" id="3.4.24.-" evidence="1"/>
<dbReference type="EMBL" id="CP000024">
    <property type="protein sequence ID" value="AAV62310.1"/>
    <property type="molecule type" value="Genomic_DNA"/>
</dbReference>
<dbReference type="RefSeq" id="WP_011227064.1">
    <property type="nucleotide sequence ID" value="NC_006449.1"/>
</dbReference>
<dbReference type="KEGG" id="stc:str0715"/>
<dbReference type="HOGENOM" id="CLU_042266_2_1_9"/>
<dbReference type="GO" id="GO:0005886">
    <property type="term" value="C:plasma membrane"/>
    <property type="evidence" value="ECO:0007669"/>
    <property type="project" value="UniProtKB-SubCell"/>
</dbReference>
<dbReference type="GO" id="GO:0004222">
    <property type="term" value="F:metalloendopeptidase activity"/>
    <property type="evidence" value="ECO:0007669"/>
    <property type="project" value="UniProtKB-UniRule"/>
</dbReference>
<dbReference type="GO" id="GO:0008270">
    <property type="term" value="F:zinc ion binding"/>
    <property type="evidence" value="ECO:0007669"/>
    <property type="project" value="UniProtKB-UniRule"/>
</dbReference>
<dbReference type="GO" id="GO:0006508">
    <property type="term" value="P:proteolysis"/>
    <property type="evidence" value="ECO:0007669"/>
    <property type="project" value="UniProtKB-KW"/>
</dbReference>
<dbReference type="CDD" id="cd07340">
    <property type="entry name" value="M48B_Htpx_like"/>
    <property type="match status" value="1"/>
</dbReference>
<dbReference type="Gene3D" id="3.30.2010.10">
    <property type="entry name" value="Metalloproteases ('zincins'), catalytic domain"/>
    <property type="match status" value="1"/>
</dbReference>
<dbReference type="HAMAP" id="MF_00188">
    <property type="entry name" value="Pept_M48_protease_HtpX"/>
    <property type="match status" value="1"/>
</dbReference>
<dbReference type="InterPro" id="IPR050083">
    <property type="entry name" value="HtpX_protease"/>
</dbReference>
<dbReference type="InterPro" id="IPR022919">
    <property type="entry name" value="Pept_M48_protease_HtpX"/>
</dbReference>
<dbReference type="InterPro" id="IPR001915">
    <property type="entry name" value="Peptidase_M48"/>
</dbReference>
<dbReference type="NCBIfam" id="NF003425">
    <property type="entry name" value="PRK04897.1"/>
    <property type="match status" value="1"/>
</dbReference>
<dbReference type="PANTHER" id="PTHR43221">
    <property type="entry name" value="PROTEASE HTPX"/>
    <property type="match status" value="1"/>
</dbReference>
<dbReference type="PANTHER" id="PTHR43221:SF1">
    <property type="entry name" value="PROTEASE HTPX"/>
    <property type="match status" value="1"/>
</dbReference>
<dbReference type="Pfam" id="PF01435">
    <property type="entry name" value="Peptidase_M48"/>
    <property type="match status" value="1"/>
</dbReference>
<proteinExistence type="inferred from homology"/>
<accession>Q5M0E9</accession>
<keyword id="KW-1003">Cell membrane</keyword>
<keyword id="KW-0378">Hydrolase</keyword>
<keyword id="KW-0472">Membrane</keyword>
<keyword id="KW-0479">Metal-binding</keyword>
<keyword id="KW-0482">Metalloprotease</keyword>
<keyword id="KW-0645">Protease</keyword>
<keyword id="KW-0812">Transmembrane</keyword>
<keyword id="KW-1133">Transmembrane helix</keyword>
<keyword id="KW-0862">Zinc</keyword>
<sequence length="299" mass="32800">MLFDQIARNKRKTWLLLLVFFLLLGLVGYGVGYLWLGSGFGGMILALVIGFIYAVTMIFQSTNVVMAMNGAREVDEQTAPNLYHVVEDMAMVAQIPMPRVFIVDDPSMNAFATGSSPKNAAVAATTGLLAVMNREELEGVIGHEVSHIRNYDIRISTIAVALASAITMLAVMARNMMFWGGGRRRNDDDRNGSSGLEIILLIISLIAIILAPLAATLVQLAISRQREFLADASSVELTRNPQGMINALLKLDNSAPMQHHVDDASAALFINDPKKESGLQKLFYTHPPISERVERLKQM</sequence>
<comment type="cofactor">
    <cofactor evidence="1">
        <name>Zn(2+)</name>
        <dbReference type="ChEBI" id="CHEBI:29105"/>
    </cofactor>
    <text evidence="1">Binds 1 zinc ion per subunit.</text>
</comment>
<comment type="subcellular location">
    <subcellularLocation>
        <location evidence="1">Cell membrane</location>
        <topology evidence="1">Multi-pass membrane protein</topology>
    </subcellularLocation>
</comment>
<comment type="similarity">
    <text evidence="1">Belongs to the peptidase M48B family.</text>
</comment>
<evidence type="ECO:0000255" key="1">
    <source>
        <dbReference type="HAMAP-Rule" id="MF_00188"/>
    </source>
</evidence>
<protein>
    <recommendedName>
        <fullName evidence="1">Protease HtpX homolog</fullName>
        <ecNumber evidence="1">3.4.24.-</ecNumber>
    </recommendedName>
</protein>
<feature type="chain" id="PRO_1000020957" description="Protease HtpX homolog">
    <location>
        <begin position="1"/>
        <end position="299"/>
    </location>
</feature>
<feature type="transmembrane region" description="Helical" evidence="1">
    <location>
        <begin position="14"/>
        <end position="34"/>
    </location>
</feature>
<feature type="transmembrane region" description="Helical" evidence="1">
    <location>
        <begin position="39"/>
        <end position="59"/>
    </location>
</feature>
<feature type="transmembrane region" description="Helical" evidence="1">
    <location>
        <begin position="153"/>
        <end position="173"/>
    </location>
</feature>
<feature type="transmembrane region" description="Helical" evidence="1">
    <location>
        <begin position="198"/>
        <end position="218"/>
    </location>
</feature>
<feature type="active site" evidence="1">
    <location>
        <position position="144"/>
    </location>
</feature>
<feature type="binding site" evidence="1">
    <location>
        <position position="143"/>
    </location>
    <ligand>
        <name>Zn(2+)</name>
        <dbReference type="ChEBI" id="CHEBI:29105"/>
        <note>catalytic</note>
    </ligand>
</feature>
<feature type="binding site" evidence="1">
    <location>
        <position position="147"/>
    </location>
    <ligand>
        <name>Zn(2+)</name>
        <dbReference type="ChEBI" id="CHEBI:29105"/>
        <note>catalytic</note>
    </ligand>
</feature>
<feature type="binding site" evidence="1">
    <location>
        <position position="227"/>
    </location>
    <ligand>
        <name>Zn(2+)</name>
        <dbReference type="ChEBI" id="CHEBI:29105"/>
        <note>catalytic</note>
    </ligand>
</feature>
<gene>
    <name evidence="1" type="primary">htpX</name>
    <name type="ordered locus">str0715</name>
</gene>
<name>HTPX_STRT1</name>